<name>PPWD1_PONAB</name>
<evidence type="ECO:0000250" key="1"/>
<evidence type="ECO:0000250" key="2">
    <source>
        <dbReference type="UniProtKB" id="Q96BP3"/>
    </source>
</evidence>
<evidence type="ECO:0000255" key="3">
    <source>
        <dbReference type="PROSITE-ProRule" id="PRU00156"/>
    </source>
</evidence>
<evidence type="ECO:0000256" key="4">
    <source>
        <dbReference type="SAM" id="MobiDB-lite"/>
    </source>
</evidence>
<evidence type="ECO:0000305" key="5"/>
<accession>Q5NVL7</accession>
<protein>
    <recommendedName>
        <fullName evidence="5">Peptidylprolyl isomerase domain and WD repeat-containing protein 1</fullName>
        <ecNumber evidence="2">5.2.1.8</ecNumber>
    </recommendedName>
</protein>
<reference key="1">
    <citation type="submission" date="2004-11" db="EMBL/GenBank/DDBJ databases">
        <authorList>
            <consortium name="The German cDNA consortium"/>
        </authorList>
    </citation>
    <scope>NUCLEOTIDE SEQUENCE [LARGE SCALE MRNA]</scope>
    <source>
        <tissue>Brain cortex</tissue>
    </source>
</reference>
<dbReference type="EC" id="5.2.1.8" evidence="2"/>
<dbReference type="EMBL" id="CR926008">
    <property type="protein sequence ID" value="CAI29646.1"/>
    <property type="molecule type" value="mRNA"/>
</dbReference>
<dbReference type="RefSeq" id="NP_001127684.1">
    <property type="nucleotide sequence ID" value="NM_001134212.1"/>
</dbReference>
<dbReference type="SMR" id="Q5NVL7"/>
<dbReference type="FunCoup" id="Q5NVL7">
    <property type="interactions" value="3102"/>
</dbReference>
<dbReference type="STRING" id="9601.ENSPPYP00000017328"/>
<dbReference type="GeneID" id="100174766"/>
<dbReference type="KEGG" id="pon:100174766"/>
<dbReference type="CTD" id="23398"/>
<dbReference type="eggNOG" id="KOG0882">
    <property type="taxonomic scope" value="Eukaryota"/>
</dbReference>
<dbReference type="InParanoid" id="Q5NVL7"/>
<dbReference type="OrthoDB" id="10264753at2759"/>
<dbReference type="Proteomes" id="UP000001595">
    <property type="component" value="Unplaced"/>
</dbReference>
<dbReference type="GO" id="GO:0005681">
    <property type="term" value="C:spliceosomal complex"/>
    <property type="evidence" value="ECO:0007669"/>
    <property type="project" value="UniProtKB-KW"/>
</dbReference>
<dbReference type="GO" id="GO:0003755">
    <property type="term" value="F:peptidyl-prolyl cis-trans isomerase activity"/>
    <property type="evidence" value="ECO:0000250"/>
    <property type="project" value="UniProtKB"/>
</dbReference>
<dbReference type="GO" id="GO:0006397">
    <property type="term" value="P:mRNA processing"/>
    <property type="evidence" value="ECO:0007669"/>
    <property type="project" value="UniProtKB-KW"/>
</dbReference>
<dbReference type="GO" id="GO:0008380">
    <property type="term" value="P:RNA splicing"/>
    <property type="evidence" value="ECO:0007669"/>
    <property type="project" value="UniProtKB-KW"/>
</dbReference>
<dbReference type="CDD" id="cd01927">
    <property type="entry name" value="cyclophilin_WD40"/>
    <property type="match status" value="1"/>
</dbReference>
<dbReference type="FunFam" id="2.40.100.10:FF:000003">
    <property type="entry name" value="Peptidylprolyl isomerase domain and WD repeat-containing 1"/>
    <property type="match status" value="1"/>
</dbReference>
<dbReference type="FunFam" id="2.130.10.10:FF:000394">
    <property type="entry name" value="Peptidylprolyl isomerase domain and WD repeat-containing protein 1"/>
    <property type="match status" value="1"/>
</dbReference>
<dbReference type="FunFam" id="2.130.10.10:FF:000119">
    <property type="entry name" value="peptidylprolyl isomerase domain and WD repeat-containing protein 1 isoform X2"/>
    <property type="match status" value="1"/>
</dbReference>
<dbReference type="Gene3D" id="2.40.100.10">
    <property type="entry name" value="Cyclophilin-like"/>
    <property type="match status" value="1"/>
</dbReference>
<dbReference type="Gene3D" id="2.130.10.10">
    <property type="entry name" value="YVTN repeat-like/Quinoprotein amine dehydrogenase"/>
    <property type="match status" value="2"/>
</dbReference>
<dbReference type="InterPro" id="IPR029000">
    <property type="entry name" value="Cyclophilin-like_dom_sf"/>
</dbReference>
<dbReference type="InterPro" id="IPR002130">
    <property type="entry name" value="Cyclophilin-type_PPIase_dom"/>
</dbReference>
<dbReference type="InterPro" id="IPR044666">
    <property type="entry name" value="Cyclophilin_A-like"/>
</dbReference>
<dbReference type="InterPro" id="IPR015943">
    <property type="entry name" value="WD40/YVTN_repeat-like_dom_sf"/>
</dbReference>
<dbReference type="InterPro" id="IPR036322">
    <property type="entry name" value="WD40_repeat_dom_sf"/>
</dbReference>
<dbReference type="InterPro" id="IPR001680">
    <property type="entry name" value="WD40_rpt"/>
</dbReference>
<dbReference type="PANTHER" id="PTHR45625">
    <property type="entry name" value="PEPTIDYL-PROLYL CIS-TRANS ISOMERASE-RELATED"/>
    <property type="match status" value="1"/>
</dbReference>
<dbReference type="PANTHER" id="PTHR45625:SF4">
    <property type="entry name" value="PEPTIDYLPROLYL ISOMERASE DOMAIN AND WD REPEAT-CONTAINING PROTEIN 1"/>
    <property type="match status" value="1"/>
</dbReference>
<dbReference type="Pfam" id="PF00160">
    <property type="entry name" value="Pro_isomerase"/>
    <property type="match status" value="1"/>
</dbReference>
<dbReference type="Pfam" id="PF00400">
    <property type="entry name" value="WD40"/>
    <property type="match status" value="3"/>
</dbReference>
<dbReference type="PRINTS" id="PR00153">
    <property type="entry name" value="CSAPPISMRASE"/>
</dbReference>
<dbReference type="SMART" id="SM00320">
    <property type="entry name" value="WD40"/>
    <property type="match status" value="4"/>
</dbReference>
<dbReference type="SUPFAM" id="SSF50891">
    <property type="entry name" value="Cyclophilin-like"/>
    <property type="match status" value="1"/>
</dbReference>
<dbReference type="SUPFAM" id="SSF50978">
    <property type="entry name" value="WD40 repeat-like"/>
    <property type="match status" value="1"/>
</dbReference>
<dbReference type="PROSITE" id="PS50072">
    <property type="entry name" value="CSA_PPIASE_2"/>
    <property type="match status" value="1"/>
</dbReference>
<dbReference type="PROSITE" id="PS50294">
    <property type="entry name" value="WD_REPEATS_REGION"/>
    <property type="match status" value="1"/>
</dbReference>
<organism>
    <name type="scientific">Pongo abelii</name>
    <name type="common">Sumatran orangutan</name>
    <name type="synonym">Pongo pygmaeus abelii</name>
    <dbReference type="NCBI Taxonomy" id="9601"/>
    <lineage>
        <taxon>Eukaryota</taxon>
        <taxon>Metazoa</taxon>
        <taxon>Chordata</taxon>
        <taxon>Craniata</taxon>
        <taxon>Vertebrata</taxon>
        <taxon>Euteleostomi</taxon>
        <taxon>Mammalia</taxon>
        <taxon>Eutheria</taxon>
        <taxon>Euarchontoglires</taxon>
        <taxon>Primates</taxon>
        <taxon>Haplorrhini</taxon>
        <taxon>Catarrhini</taxon>
        <taxon>Hominidae</taxon>
        <taxon>Pongo</taxon>
    </lineage>
</organism>
<gene>
    <name evidence="2" type="primary">PPWD1</name>
</gene>
<keyword id="KW-0007">Acetylation</keyword>
<keyword id="KW-0413">Isomerase</keyword>
<keyword id="KW-0507">mRNA processing</keyword>
<keyword id="KW-0508">mRNA splicing</keyword>
<keyword id="KW-0539">Nucleus</keyword>
<keyword id="KW-1185">Reference proteome</keyword>
<keyword id="KW-0677">Repeat</keyword>
<keyword id="KW-0697">Rotamase</keyword>
<keyword id="KW-0747">Spliceosome</keyword>
<keyword id="KW-0853">WD repeat</keyword>
<sequence length="646" mass="73527">MAAESGSDFQQRRRRRRDPEEPEKTELSERELAVAVAVSQENDEENEERWVGPLPVEATLAKKRKVLEFERVYLDNLPSASMYERSYMHRDVITHVVCTKTDFIITASHDGHVKFWKKIEEGIEFVKHFRSHLGVIECIAVSSEGALFCSVGDDKAMKVFDVVNFDMINMLKLGYFPGQCEWIYCPGDAISSVAASEKSTGKIFIYDGRGDNQPLHIFDKLHTSPLTQIRLNPVYKAVVSSDKSGMIEYWTGPPHEYKFPKNVNWEYKTDTDLYEFAKCKAYPTSICFSPDGKKIATIGSDRKVRISKFLTGKLMRVFDESLSMFTELQQMRQQLPDMEFGRRMAVERELEKVDAVRLINIVFDETGHFVLYGTMLGIKVINVETNRCVRILGKQENIRVMQLALFQGIAKKHRAATTIEMKASENPVLQNIQADPTVVCTPFKKNRFYMFTKREPEDTKSADSDRDVFNEKPSKEEVMAATQAEGPKRVSDSAIIHTSMGDIHTKLFPVECPKTVENFCVHSRNGYYNGHTFHRIIKGFMIQTGDPTGTGMGGESIWGGEFEDEFHSTLRHDRPYTLSMANAGSNTNGSQFFITVVPTPWLDNKHTVFGRVTKGMEVVQRISNVKVNPKTDKPYEDVSIINITVK</sequence>
<comment type="function">
    <text evidence="2">PPIase that catalyzes the cis-trans isomerization of proline imidic peptide bonds in oligopeptides and may therefore assist protein folding. May be involved in pre-mRNA splicing.</text>
</comment>
<comment type="catalytic activity">
    <reaction evidence="2">
        <text>[protein]-peptidylproline (omega=180) = [protein]-peptidylproline (omega=0)</text>
        <dbReference type="Rhea" id="RHEA:16237"/>
        <dbReference type="Rhea" id="RHEA-COMP:10747"/>
        <dbReference type="Rhea" id="RHEA-COMP:10748"/>
        <dbReference type="ChEBI" id="CHEBI:83833"/>
        <dbReference type="ChEBI" id="CHEBI:83834"/>
        <dbReference type="EC" id="5.2.1.8"/>
    </reaction>
</comment>
<comment type="activity regulation">
    <text evidence="2">Inhibited by cyclosporin A (CsA).</text>
</comment>
<comment type="subunit">
    <text evidence="2">Identified in the spliceosome C complex.</text>
</comment>
<comment type="subcellular location">
    <subcellularLocation>
        <location evidence="2">Nucleus</location>
    </subcellularLocation>
    <text evidence="1 2">Associated with spliceosomal complexes.</text>
</comment>
<comment type="similarity">
    <text evidence="5">Belongs to the cyclophilin-type PPIase family. PPIL1 subfamily.</text>
</comment>
<proteinExistence type="evidence at transcript level"/>
<feature type="initiator methionine" description="Removed" evidence="2">
    <location>
        <position position="1"/>
    </location>
</feature>
<feature type="chain" id="PRO_0000240308" description="Peptidylprolyl isomerase domain and WD repeat-containing protein 1">
    <location>
        <begin position="2"/>
        <end position="646"/>
    </location>
</feature>
<feature type="repeat" description="WD 1">
    <location>
        <begin position="88"/>
        <end position="126"/>
    </location>
</feature>
<feature type="repeat" description="WD 2">
    <location>
        <begin position="131"/>
        <end position="170"/>
    </location>
</feature>
<feature type="repeat" description="WD 3">
    <location>
        <begin position="221"/>
        <end position="260"/>
    </location>
</feature>
<feature type="repeat" description="WD 4">
    <location>
        <begin position="278"/>
        <end position="319"/>
    </location>
</feature>
<feature type="domain" description="PPIase cyclophilin-type" evidence="3">
    <location>
        <begin position="490"/>
        <end position="645"/>
    </location>
</feature>
<feature type="region of interest" description="Disordered" evidence="4">
    <location>
        <begin position="1"/>
        <end position="30"/>
    </location>
</feature>
<feature type="region of interest" description="Disordered" evidence="4">
    <location>
        <begin position="455"/>
        <end position="490"/>
    </location>
</feature>
<feature type="compositionally biased region" description="Basic and acidic residues" evidence="4">
    <location>
        <begin position="17"/>
        <end position="30"/>
    </location>
</feature>
<feature type="compositionally biased region" description="Basic and acidic residues" evidence="4">
    <location>
        <begin position="455"/>
        <end position="478"/>
    </location>
</feature>
<feature type="modified residue" description="N-acetylalanine" evidence="2">
    <location>
        <position position="2"/>
    </location>
</feature>